<sequence>MAKTTDVRPKITMACTECKERNYITKKNRRNDPDRLDLAKFCPRCGKKTTHRETR</sequence>
<accession>A6W5R3</accession>
<reference key="1">
    <citation type="journal article" date="2008" name="PLoS ONE">
        <title>Survival in nuclear waste, extreme resistance, and potential applications gleaned from the genome sequence of Kineococcus radiotolerans SRS30216.</title>
        <authorList>
            <person name="Bagwell C.E."/>
            <person name="Bhat S."/>
            <person name="Hawkins G.M."/>
            <person name="Smith B.W."/>
            <person name="Biswas T."/>
            <person name="Hoover T.R."/>
            <person name="Saunders E."/>
            <person name="Han C.S."/>
            <person name="Tsodikov O.V."/>
            <person name="Shimkets L.J."/>
        </authorList>
    </citation>
    <scope>NUCLEOTIDE SEQUENCE [LARGE SCALE GENOMIC DNA]</scope>
    <source>
        <strain>ATCC BAA-149 / DSM 14245 / SRS30216</strain>
    </source>
</reference>
<organism>
    <name type="scientific">Kineococcus radiotolerans (strain ATCC BAA-149 / DSM 14245 / SRS30216)</name>
    <dbReference type="NCBI Taxonomy" id="266940"/>
    <lineage>
        <taxon>Bacteria</taxon>
        <taxon>Bacillati</taxon>
        <taxon>Actinomycetota</taxon>
        <taxon>Actinomycetes</taxon>
        <taxon>Kineosporiales</taxon>
        <taxon>Kineosporiaceae</taxon>
        <taxon>Kineococcus</taxon>
    </lineage>
</organism>
<proteinExistence type="inferred from homology"/>
<feature type="chain" id="PRO_0000356490" description="Large ribosomal subunit protein bL33C">
    <location>
        <begin position="1"/>
        <end position="55"/>
    </location>
</feature>
<dbReference type="EMBL" id="CP000750">
    <property type="protein sequence ID" value="ABS02152.1"/>
    <property type="molecule type" value="Genomic_DNA"/>
</dbReference>
<dbReference type="SMR" id="A6W5R3"/>
<dbReference type="STRING" id="266940.Krad_0663"/>
<dbReference type="KEGG" id="kra:Krad_0663"/>
<dbReference type="eggNOG" id="COG0267">
    <property type="taxonomic scope" value="Bacteria"/>
</dbReference>
<dbReference type="HOGENOM" id="CLU_190949_0_2_11"/>
<dbReference type="OrthoDB" id="21586at2"/>
<dbReference type="Proteomes" id="UP000001116">
    <property type="component" value="Chromosome"/>
</dbReference>
<dbReference type="GO" id="GO:0005737">
    <property type="term" value="C:cytoplasm"/>
    <property type="evidence" value="ECO:0007669"/>
    <property type="project" value="UniProtKB-ARBA"/>
</dbReference>
<dbReference type="GO" id="GO:1990904">
    <property type="term" value="C:ribonucleoprotein complex"/>
    <property type="evidence" value="ECO:0007669"/>
    <property type="project" value="UniProtKB-KW"/>
</dbReference>
<dbReference type="GO" id="GO:0005840">
    <property type="term" value="C:ribosome"/>
    <property type="evidence" value="ECO:0007669"/>
    <property type="project" value="UniProtKB-KW"/>
</dbReference>
<dbReference type="GO" id="GO:0003735">
    <property type="term" value="F:structural constituent of ribosome"/>
    <property type="evidence" value="ECO:0007669"/>
    <property type="project" value="InterPro"/>
</dbReference>
<dbReference type="GO" id="GO:0006412">
    <property type="term" value="P:translation"/>
    <property type="evidence" value="ECO:0007669"/>
    <property type="project" value="UniProtKB-UniRule"/>
</dbReference>
<dbReference type="Gene3D" id="2.20.28.120">
    <property type="entry name" value="Ribosomal protein L33"/>
    <property type="match status" value="1"/>
</dbReference>
<dbReference type="HAMAP" id="MF_00294">
    <property type="entry name" value="Ribosomal_bL33"/>
    <property type="match status" value="1"/>
</dbReference>
<dbReference type="InterPro" id="IPR001705">
    <property type="entry name" value="Ribosomal_bL33"/>
</dbReference>
<dbReference type="InterPro" id="IPR038584">
    <property type="entry name" value="Ribosomal_bL33_sf"/>
</dbReference>
<dbReference type="InterPro" id="IPR011332">
    <property type="entry name" value="Ribosomal_zn-bd"/>
</dbReference>
<dbReference type="NCBIfam" id="NF001764">
    <property type="entry name" value="PRK00504.1"/>
    <property type="match status" value="1"/>
</dbReference>
<dbReference type="NCBIfam" id="NF001860">
    <property type="entry name" value="PRK00595.1"/>
    <property type="match status" value="1"/>
</dbReference>
<dbReference type="NCBIfam" id="TIGR01023">
    <property type="entry name" value="rpmG_bact"/>
    <property type="match status" value="1"/>
</dbReference>
<dbReference type="PANTHER" id="PTHR43168">
    <property type="entry name" value="50S RIBOSOMAL PROTEIN L33, CHLOROPLASTIC"/>
    <property type="match status" value="1"/>
</dbReference>
<dbReference type="PANTHER" id="PTHR43168:SF2">
    <property type="entry name" value="LARGE RIBOSOMAL SUBUNIT PROTEIN BL33C"/>
    <property type="match status" value="1"/>
</dbReference>
<dbReference type="Pfam" id="PF00471">
    <property type="entry name" value="Ribosomal_L33"/>
    <property type="match status" value="1"/>
</dbReference>
<dbReference type="SUPFAM" id="SSF57829">
    <property type="entry name" value="Zn-binding ribosomal proteins"/>
    <property type="match status" value="1"/>
</dbReference>
<keyword id="KW-1185">Reference proteome</keyword>
<keyword id="KW-0687">Ribonucleoprotein</keyword>
<keyword id="KW-0689">Ribosomal protein</keyword>
<name>RL333_KINRD</name>
<comment type="similarity">
    <text evidence="1">Belongs to the bacterial ribosomal protein bL33 family.</text>
</comment>
<protein>
    <recommendedName>
        <fullName evidence="1">Large ribosomal subunit protein bL33C</fullName>
    </recommendedName>
    <alternativeName>
        <fullName evidence="1">50S ribosomal protein L33 3</fullName>
    </alternativeName>
</protein>
<gene>
    <name evidence="1" type="primary">rpmG3</name>
    <name type="ordered locus">Krad_0663</name>
</gene>
<evidence type="ECO:0000255" key="1">
    <source>
        <dbReference type="HAMAP-Rule" id="MF_00294"/>
    </source>
</evidence>